<keyword id="KW-0963">Cytoplasm</keyword>
<keyword id="KW-0444">Lipid biosynthesis</keyword>
<keyword id="KW-0443">Lipid metabolism</keyword>
<keyword id="KW-0594">Phospholipid biosynthesis</keyword>
<keyword id="KW-1208">Phospholipid metabolism</keyword>
<keyword id="KW-0808">Transferase</keyword>
<name>PLSX_STRPB</name>
<proteinExistence type="inferred from homology"/>
<protein>
    <recommendedName>
        <fullName evidence="1">Phosphate acyltransferase</fullName>
        <ecNumber evidence="1">2.3.1.274</ecNumber>
    </recommendedName>
    <alternativeName>
        <fullName evidence="1">Acyl-ACP phosphotransacylase</fullName>
    </alternativeName>
    <alternativeName>
        <fullName evidence="1">Acyl-[acyl-carrier-protein]--phosphate acyltransferase</fullName>
    </alternativeName>
    <alternativeName>
        <fullName evidence="1">Phosphate-acyl-ACP acyltransferase</fullName>
    </alternativeName>
</protein>
<gene>
    <name evidence="1" type="primary">plsX</name>
    <name type="ordered locus">MGAS2096_Spy0021</name>
</gene>
<dbReference type="EC" id="2.3.1.274" evidence="1"/>
<dbReference type="EMBL" id="CP000261">
    <property type="protein sequence ID" value="ABF35073.1"/>
    <property type="status" value="ALT_INIT"/>
    <property type="molecule type" value="Genomic_DNA"/>
</dbReference>
<dbReference type="SMR" id="Q1JE85"/>
<dbReference type="KEGG" id="spj:MGAS2096_Spy0021"/>
<dbReference type="HOGENOM" id="CLU_039379_1_1_9"/>
<dbReference type="UniPathway" id="UPA00085"/>
<dbReference type="GO" id="GO:0005737">
    <property type="term" value="C:cytoplasm"/>
    <property type="evidence" value="ECO:0007669"/>
    <property type="project" value="UniProtKB-SubCell"/>
</dbReference>
<dbReference type="GO" id="GO:0043811">
    <property type="term" value="F:phosphate:acyl-[acyl carrier protein] acyltransferase activity"/>
    <property type="evidence" value="ECO:0007669"/>
    <property type="project" value="UniProtKB-UniRule"/>
</dbReference>
<dbReference type="GO" id="GO:0006633">
    <property type="term" value="P:fatty acid biosynthetic process"/>
    <property type="evidence" value="ECO:0007669"/>
    <property type="project" value="UniProtKB-UniRule"/>
</dbReference>
<dbReference type="GO" id="GO:0008654">
    <property type="term" value="P:phospholipid biosynthetic process"/>
    <property type="evidence" value="ECO:0007669"/>
    <property type="project" value="UniProtKB-KW"/>
</dbReference>
<dbReference type="Gene3D" id="3.40.718.10">
    <property type="entry name" value="Isopropylmalate Dehydrogenase"/>
    <property type="match status" value="1"/>
</dbReference>
<dbReference type="HAMAP" id="MF_00019">
    <property type="entry name" value="PlsX"/>
    <property type="match status" value="1"/>
</dbReference>
<dbReference type="InterPro" id="IPR003664">
    <property type="entry name" value="FA_synthesis"/>
</dbReference>
<dbReference type="InterPro" id="IPR012281">
    <property type="entry name" value="Phospholipid_synth_PlsX-like"/>
</dbReference>
<dbReference type="NCBIfam" id="TIGR00182">
    <property type="entry name" value="plsX"/>
    <property type="match status" value="1"/>
</dbReference>
<dbReference type="PANTHER" id="PTHR30100">
    <property type="entry name" value="FATTY ACID/PHOSPHOLIPID SYNTHESIS PROTEIN PLSX"/>
    <property type="match status" value="1"/>
</dbReference>
<dbReference type="PANTHER" id="PTHR30100:SF1">
    <property type="entry name" value="PHOSPHATE ACYLTRANSFERASE"/>
    <property type="match status" value="1"/>
</dbReference>
<dbReference type="Pfam" id="PF02504">
    <property type="entry name" value="FA_synthesis"/>
    <property type="match status" value="1"/>
</dbReference>
<dbReference type="PIRSF" id="PIRSF002465">
    <property type="entry name" value="Phsphlp_syn_PlsX"/>
    <property type="match status" value="1"/>
</dbReference>
<dbReference type="SUPFAM" id="SSF53659">
    <property type="entry name" value="Isocitrate/Isopropylmalate dehydrogenase-like"/>
    <property type="match status" value="1"/>
</dbReference>
<reference key="1">
    <citation type="journal article" date="2006" name="Proc. Natl. Acad. Sci. U.S.A.">
        <title>Molecular genetic anatomy of inter- and intraserotype variation in the human bacterial pathogen group A Streptococcus.</title>
        <authorList>
            <person name="Beres S.B."/>
            <person name="Richter E.W."/>
            <person name="Nagiec M.J."/>
            <person name="Sumby P."/>
            <person name="Porcella S.F."/>
            <person name="DeLeo F.R."/>
            <person name="Musser J.M."/>
        </authorList>
    </citation>
    <scope>NUCLEOTIDE SEQUENCE [LARGE SCALE GENOMIC DNA]</scope>
    <source>
        <strain>MGAS2096</strain>
    </source>
</reference>
<comment type="function">
    <text evidence="1">Catalyzes the reversible formation of acyl-phosphate (acyl-PO(4)) from acyl-[acyl-carrier-protein] (acyl-ACP). This enzyme utilizes acyl-ACP as fatty acyl donor, but not acyl-CoA.</text>
</comment>
<comment type="catalytic activity">
    <reaction evidence="1">
        <text>a fatty acyl-[ACP] + phosphate = an acyl phosphate + holo-[ACP]</text>
        <dbReference type="Rhea" id="RHEA:42292"/>
        <dbReference type="Rhea" id="RHEA-COMP:9685"/>
        <dbReference type="Rhea" id="RHEA-COMP:14125"/>
        <dbReference type="ChEBI" id="CHEBI:43474"/>
        <dbReference type="ChEBI" id="CHEBI:59918"/>
        <dbReference type="ChEBI" id="CHEBI:64479"/>
        <dbReference type="ChEBI" id="CHEBI:138651"/>
        <dbReference type="EC" id="2.3.1.274"/>
    </reaction>
</comment>
<comment type="pathway">
    <text evidence="1">Lipid metabolism; phospholipid metabolism.</text>
</comment>
<comment type="subunit">
    <text evidence="1">Homodimer. Probably interacts with PlsY.</text>
</comment>
<comment type="subcellular location">
    <subcellularLocation>
        <location evidence="1">Cytoplasm</location>
    </subcellularLocation>
    <text evidence="1">Associated with the membrane possibly through PlsY.</text>
</comment>
<comment type="similarity">
    <text evidence="1">Belongs to the PlsX family.</text>
</comment>
<comment type="sequence caution" evidence="2">
    <conflict type="erroneous initiation">
        <sequence resource="EMBL-CDS" id="ABF35073"/>
    </conflict>
</comment>
<feature type="chain" id="PRO_0000329268" description="Phosphate acyltransferase">
    <location>
        <begin position="1"/>
        <end position="335"/>
    </location>
</feature>
<organism>
    <name type="scientific">Streptococcus pyogenes serotype M12 (strain MGAS2096)</name>
    <dbReference type="NCBI Taxonomy" id="370553"/>
    <lineage>
        <taxon>Bacteria</taxon>
        <taxon>Bacillati</taxon>
        <taxon>Bacillota</taxon>
        <taxon>Bacilli</taxon>
        <taxon>Lactobacillales</taxon>
        <taxon>Streptococcaceae</taxon>
        <taxon>Streptococcus</taxon>
    </lineage>
</organism>
<sequence>MKRIAIDAMGGDNAPKAIVEGVNQAIEAFSDIEIQLYGDQTKINSYLIQSDRVAIIHTDEKIMSDDEPAKAVRRKKKASMVLAAKAVKEGKADAIISAGNTGALLAVGLFVVGRIKGVDRPGLLSTIPTVTGLGFDMLDLGANAENTAKHLHQYAILGSFYAKNVRGIANPRVGLLNNGTEETKGDPLRKATYELLTADNTISFVGNVEARELMSGVADVIVSDGFTGNAVLKSIEGTAISIMGQLKQIINSGGIKTKIGASLLKSSLYEMKKTLDYSSAGGAVLFGLKAPVVKSHGSSDVKAIFSTIKQVRTMLDTNVVGQLVEEFAKETQVND</sequence>
<accession>Q1JE85</accession>
<evidence type="ECO:0000255" key="1">
    <source>
        <dbReference type="HAMAP-Rule" id="MF_00019"/>
    </source>
</evidence>
<evidence type="ECO:0000305" key="2"/>